<organism>
    <name type="scientific">Rhodopseudomonas palustris (strain HaA2)</name>
    <dbReference type="NCBI Taxonomy" id="316058"/>
    <lineage>
        <taxon>Bacteria</taxon>
        <taxon>Pseudomonadati</taxon>
        <taxon>Pseudomonadota</taxon>
        <taxon>Alphaproteobacteria</taxon>
        <taxon>Hyphomicrobiales</taxon>
        <taxon>Nitrobacteraceae</taxon>
        <taxon>Rhodopseudomonas</taxon>
    </lineage>
</organism>
<evidence type="ECO:0000255" key="1">
    <source>
        <dbReference type="HAMAP-Rule" id="MF_00057"/>
    </source>
</evidence>
<evidence type="ECO:0000305" key="2"/>
<sequence>MTAPRTLVLIPARMAATRLPGKPLLDIGGVPMVVHVLRRALAANIGRVAVATDTPAIADAVRAHGGEVVMTRADHPSGSDRIHEALQTLDPQRTIETVINLQGDFPTIRPEQIGAVLAPLDDPAVDIATLAAEIHTEEESTNPNVVKVVGSHIGTTRLRALYFTRATAPWGDGPRYHHIGLYAYRRAALERFVALPPSPLEQREKLEQLRALEAGMRIDVGIVDSVPRGVDTPADLETARRVLAG</sequence>
<keyword id="KW-0963">Cytoplasm</keyword>
<keyword id="KW-0448">Lipopolysaccharide biosynthesis</keyword>
<keyword id="KW-0548">Nucleotidyltransferase</keyword>
<keyword id="KW-1185">Reference proteome</keyword>
<keyword id="KW-0808">Transferase</keyword>
<name>KDSB_RHOP2</name>
<dbReference type="EC" id="2.7.7.38" evidence="1"/>
<dbReference type="EMBL" id="CP000250">
    <property type="protein sequence ID" value="ABD06476.1"/>
    <property type="status" value="ALT_INIT"/>
    <property type="molecule type" value="Genomic_DNA"/>
</dbReference>
<dbReference type="RefSeq" id="WP_041798121.1">
    <property type="nucleotide sequence ID" value="NC_007778.1"/>
</dbReference>
<dbReference type="SMR" id="Q2IZ84"/>
<dbReference type="STRING" id="316058.RPB_1768"/>
<dbReference type="KEGG" id="rpb:RPB_1768"/>
<dbReference type="eggNOG" id="COG1212">
    <property type="taxonomic scope" value="Bacteria"/>
</dbReference>
<dbReference type="HOGENOM" id="CLU_065038_0_1_5"/>
<dbReference type="OrthoDB" id="9815559at2"/>
<dbReference type="UniPathway" id="UPA00030"/>
<dbReference type="UniPathway" id="UPA00358">
    <property type="reaction ID" value="UER00476"/>
</dbReference>
<dbReference type="Proteomes" id="UP000008809">
    <property type="component" value="Chromosome"/>
</dbReference>
<dbReference type="GO" id="GO:0005829">
    <property type="term" value="C:cytosol"/>
    <property type="evidence" value="ECO:0007669"/>
    <property type="project" value="TreeGrafter"/>
</dbReference>
<dbReference type="GO" id="GO:0008690">
    <property type="term" value="F:3-deoxy-manno-octulosonate cytidylyltransferase activity"/>
    <property type="evidence" value="ECO:0007669"/>
    <property type="project" value="UniProtKB-UniRule"/>
</dbReference>
<dbReference type="GO" id="GO:0033468">
    <property type="term" value="P:CMP-keto-3-deoxy-D-manno-octulosonic acid biosynthetic process"/>
    <property type="evidence" value="ECO:0007669"/>
    <property type="project" value="UniProtKB-UniRule"/>
</dbReference>
<dbReference type="GO" id="GO:0009103">
    <property type="term" value="P:lipopolysaccharide biosynthetic process"/>
    <property type="evidence" value="ECO:0007669"/>
    <property type="project" value="UniProtKB-UniRule"/>
</dbReference>
<dbReference type="CDD" id="cd02517">
    <property type="entry name" value="CMP-KDO-Synthetase"/>
    <property type="match status" value="1"/>
</dbReference>
<dbReference type="Gene3D" id="3.90.550.10">
    <property type="entry name" value="Spore Coat Polysaccharide Biosynthesis Protein SpsA, Chain A"/>
    <property type="match status" value="1"/>
</dbReference>
<dbReference type="HAMAP" id="MF_00057">
    <property type="entry name" value="KdsB"/>
    <property type="match status" value="1"/>
</dbReference>
<dbReference type="InterPro" id="IPR003329">
    <property type="entry name" value="Cytidylyl_trans"/>
</dbReference>
<dbReference type="InterPro" id="IPR004528">
    <property type="entry name" value="KdsB"/>
</dbReference>
<dbReference type="InterPro" id="IPR029044">
    <property type="entry name" value="Nucleotide-diphossugar_trans"/>
</dbReference>
<dbReference type="NCBIfam" id="TIGR00466">
    <property type="entry name" value="kdsB"/>
    <property type="match status" value="1"/>
</dbReference>
<dbReference type="NCBIfam" id="NF003948">
    <property type="entry name" value="PRK05450.1-1"/>
    <property type="match status" value="1"/>
</dbReference>
<dbReference type="NCBIfam" id="NF003952">
    <property type="entry name" value="PRK05450.1-5"/>
    <property type="match status" value="1"/>
</dbReference>
<dbReference type="PANTHER" id="PTHR42866">
    <property type="entry name" value="3-DEOXY-MANNO-OCTULOSONATE CYTIDYLYLTRANSFERASE"/>
    <property type="match status" value="1"/>
</dbReference>
<dbReference type="PANTHER" id="PTHR42866:SF2">
    <property type="entry name" value="3-DEOXY-MANNO-OCTULOSONATE CYTIDYLYLTRANSFERASE, MITOCHONDRIAL"/>
    <property type="match status" value="1"/>
</dbReference>
<dbReference type="Pfam" id="PF02348">
    <property type="entry name" value="CTP_transf_3"/>
    <property type="match status" value="1"/>
</dbReference>
<dbReference type="SUPFAM" id="SSF53448">
    <property type="entry name" value="Nucleotide-diphospho-sugar transferases"/>
    <property type="match status" value="1"/>
</dbReference>
<protein>
    <recommendedName>
        <fullName evidence="1">3-deoxy-manno-octulosonate cytidylyltransferase</fullName>
        <ecNumber evidence="1">2.7.7.38</ecNumber>
    </recommendedName>
    <alternativeName>
        <fullName evidence="1">CMP-2-keto-3-deoxyoctulosonic acid synthase</fullName>
        <shortName evidence="1">CKS</shortName>
        <shortName evidence="1">CMP-KDO synthase</shortName>
    </alternativeName>
</protein>
<proteinExistence type="inferred from homology"/>
<reference key="1">
    <citation type="submission" date="2006-01" db="EMBL/GenBank/DDBJ databases">
        <title>Complete sequence of Rhodopseudomonas palustris HaA2.</title>
        <authorList>
            <consortium name="US DOE Joint Genome Institute"/>
            <person name="Copeland A."/>
            <person name="Lucas S."/>
            <person name="Lapidus A."/>
            <person name="Barry K."/>
            <person name="Detter J.C."/>
            <person name="Glavina T."/>
            <person name="Hammon N."/>
            <person name="Israni S."/>
            <person name="Pitluck S."/>
            <person name="Chain P."/>
            <person name="Malfatti S."/>
            <person name="Shin M."/>
            <person name="Vergez L."/>
            <person name="Schmutz J."/>
            <person name="Larimer F."/>
            <person name="Land M."/>
            <person name="Hauser L."/>
            <person name="Pelletier D.A."/>
            <person name="Kyrpides N."/>
            <person name="Anderson I."/>
            <person name="Oda Y."/>
            <person name="Harwood C.S."/>
            <person name="Richardson P."/>
        </authorList>
    </citation>
    <scope>NUCLEOTIDE SEQUENCE [LARGE SCALE GENOMIC DNA]</scope>
    <source>
        <strain>HaA2</strain>
    </source>
</reference>
<feature type="chain" id="PRO_0000370139" description="3-deoxy-manno-octulosonate cytidylyltransferase">
    <location>
        <begin position="1"/>
        <end position="245"/>
    </location>
</feature>
<gene>
    <name evidence="1" type="primary">kdsB</name>
    <name type="ordered locus">RPB_1768</name>
</gene>
<accession>Q2IZ84</accession>
<comment type="function">
    <text evidence="1">Activates KDO (a required 8-carbon sugar) for incorporation into bacterial lipopolysaccharide in Gram-negative bacteria.</text>
</comment>
<comment type="catalytic activity">
    <reaction evidence="1">
        <text>3-deoxy-alpha-D-manno-oct-2-ulosonate + CTP = CMP-3-deoxy-beta-D-manno-octulosonate + diphosphate</text>
        <dbReference type="Rhea" id="RHEA:23448"/>
        <dbReference type="ChEBI" id="CHEBI:33019"/>
        <dbReference type="ChEBI" id="CHEBI:37563"/>
        <dbReference type="ChEBI" id="CHEBI:85986"/>
        <dbReference type="ChEBI" id="CHEBI:85987"/>
        <dbReference type="EC" id="2.7.7.38"/>
    </reaction>
</comment>
<comment type="pathway">
    <text evidence="1">Nucleotide-sugar biosynthesis; CMP-3-deoxy-D-manno-octulosonate biosynthesis; CMP-3-deoxy-D-manno-octulosonate from 3-deoxy-D-manno-octulosonate and CTP: step 1/1.</text>
</comment>
<comment type="pathway">
    <text evidence="1">Bacterial outer membrane biogenesis; lipopolysaccharide biosynthesis.</text>
</comment>
<comment type="subcellular location">
    <subcellularLocation>
        <location evidence="1">Cytoplasm</location>
    </subcellularLocation>
</comment>
<comment type="similarity">
    <text evidence="1">Belongs to the KdsB family.</text>
</comment>
<comment type="sequence caution" evidence="2">
    <conflict type="erroneous initiation">
        <sequence resource="EMBL-CDS" id="ABD06476"/>
    </conflict>
</comment>